<keyword id="KW-0002">3D-structure</keyword>
<keyword id="KW-0903">Direct protein sequencing</keyword>
<keyword id="KW-1185">Reference proteome</keyword>
<keyword id="KW-0687">Ribonucleoprotein</keyword>
<keyword id="KW-0689">Ribosomal protein</keyword>
<organism>
    <name type="scientific">Pseudomonas aeruginosa (strain ATCC 15692 / DSM 22644 / CIP 104116 / JCM 14847 / LMG 12228 / 1C / PRS 101 / PAO1)</name>
    <dbReference type="NCBI Taxonomy" id="208964"/>
    <lineage>
        <taxon>Bacteria</taxon>
        <taxon>Pseudomonadati</taxon>
        <taxon>Pseudomonadota</taxon>
        <taxon>Gammaproteobacteria</taxon>
        <taxon>Pseudomonadales</taxon>
        <taxon>Pseudomonadaceae</taxon>
        <taxon>Pseudomonas</taxon>
    </lineage>
</organism>
<proteinExistence type="evidence at protein level"/>
<sequence>MAHKKAGGSTRNGRDSESKRLGVKLFGGQAVKAGNILVRQRGTKFHAGYGVGLGKDHTLFAKVDGVVKFETKGAFGRKYVSIVAA</sequence>
<accession>Q9HVL7</accession>
<accession>Q9R4Q1</accession>
<evidence type="ECO:0000255" key="1">
    <source>
        <dbReference type="HAMAP-Rule" id="MF_00539"/>
    </source>
</evidence>
<evidence type="ECO:0000269" key="2">
    <source>
    </source>
</evidence>
<evidence type="ECO:0000305" key="3"/>
<comment type="similarity">
    <text evidence="1">Belongs to the bacterial ribosomal protein bL27 family.</text>
</comment>
<gene>
    <name evidence="1" type="primary">rpmA</name>
    <name type="ordered locus">PA4567</name>
</gene>
<feature type="initiator methionine" description="Removed" evidence="2">
    <location>
        <position position="1"/>
    </location>
</feature>
<feature type="chain" id="PRO_0000181147" description="Large ribosomal subunit protein bL27">
    <location>
        <begin position="2"/>
        <end position="85"/>
    </location>
</feature>
<feature type="sequence conflict" description="In Ref. 2; AA sequence." evidence="3" ref="2">
    <original>K</original>
    <variation>C</variation>
    <location>
        <position position="5"/>
    </location>
</feature>
<protein>
    <recommendedName>
        <fullName evidence="1">Large ribosomal subunit protein bL27</fullName>
    </recommendedName>
    <alternativeName>
        <fullName evidence="3">50S ribosomal protein L27</fullName>
    </alternativeName>
</protein>
<dbReference type="EMBL" id="AE004091">
    <property type="protein sequence ID" value="AAG07955.1"/>
    <property type="molecule type" value="Genomic_DNA"/>
</dbReference>
<dbReference type="PIR" id="A83075">
    <property type="entry name" value="A83075"/>
</dbReference>
<dbReference type="RefSeq" id="NP_253257.1">
    <property type="nucleotide sequence ID" value="NC_002516.2"/>
</dbReference>
<dbReference type="RefSeq" id="WP_003094760.1">
    <property type="nucleotide sequence ID" value="NZ_QZGE01000004.1"/>
</dbReference>
<dbReference type="PDB" id="7UNR">
    <property type="method" value="EM"/>
    <property type="resolution" value="2.90 A"/>
    <property type="chains" value="Y=1-85"/>
</dbReference>
<dbReference type="PDB" id="7UNU">
    <property type="method" value="EM"/>
    <property type="resolution" value="2.90 A"/>
    <property type="chains" value="Y=1-85"/>
</dbReference>
<dbReference type="PDB" id="7UNV">
    <property type="method" value="EM"/>
    <property type="resolution" value="2.70 A"/>
    <property type="chains" value="Y=1-85"/>
</dbReference>
<dbReference type="PDB" id="7UNW">
    <property type="method" value="EM"/>
    <property type="resolution" value="2.60 A"/>
    <property type="chains" value="Y=1-85"/>
</dbReference>
<dbReference type="PDB" id="8CD1">
    <property type="method" value="EM"/>
    <property type="resolution" value="3.00 A"/>
    <property type="chains" value="W=1-85"/>
</dbReference>
<dbReference type="PDB" id="8RWG">
    <property type="method" value="EM"/>
    <property type="resolution" value="2.46 A"/>
    <property type="chains" value="1=1-85"/>
</dbReference>
<dbReference type="PDBsum" id="7UNR"/>
<dbReference type="PDBsum" id="7UNU"/>
<dbReference type="PDBsum" id="7UNV"/>
<dbReference type="PDBsum" id="7UNW"/>
<dbReference type="PDBsum" id="8CD1"/>
<dbReference type="PDBsum" id="8RWG"/>
<dbReference type="EMDB" id="EMD-16566"/>
<dbReference type="EMDB" id="EMD-19547"/>
<dbReference type="EMDB" id="EMD-26630"/>
<dbReference type="EMDB" id="EMD-26633"/>
<dbReference type="EMDB" id="EMD-26634"/>
<dbReference type="EMDB" id="EMD-26635"/>
<dbReference type="SMR" id="Q9HVL7"/>
<dbReference type="FunCoup" id="Q9HVL7">
    <property type="interactions" value="719"/>
</dbReference>
<dbReference type="STRING" id="208964.PA4567"/>
<dbReference type="PaxDb" id="208964-PA4567"/>
<dbReference type="DNASU" id="880878"/>
<dbReference type="GeneID" id="77223074"/>
<dbReference type="GeneID" id="880878"/>
<dbReference type="KEGG" id="pae:PA4567"/>
<dbReference type="PATRIC" id="fig|208964.12.peg.4779"/>
<dbReference type="PseudoCAP" id="PA4567"/>
<dbReference type="HOGENOM" id="CLU_095424_4_1_6"/>
<dbReference type="InParanoid" id="Q9HVL7"/>
<dbReference type="OrthoDB" id="9803474at2"/>
<dbReference type="PhylomeDB" id="Q9HVL7"/>
<dbReference type="BioCyc" id="PAER208964:G1FZ6-4660-MONOMER"/>
<dbReference type="PRO" id="PR:Q9HVL7"/>
<dbReference type="Proteomes" id="UP000002438">
    <property type="component" value="Chromosome"/>
</dbReference>
<dbReference type="GO" id="GO:0022625">
    <property type="term" value="C:cytosolic large ribosomal subunit"/>
    <property type="evidence" value="ECO:0000318"/>
    <property type="project" value="GO_Central"/>
</dbReference>
<dbReference type="GO" id="GO:0003735">
    <property type="term" value="F:structural constituent of ribosome"/>
    <property type="evidence" value="ECO:0000318"/>
    <property type="project" value="GO_Central"/>
</dbReference>
<dbReference type="GO" id="GO:0006412">
    <property type="term" value="P:translation"/>
    <property type="evidence" value="ECO:0007669"/>
    <property type="project" value="UniProtKB-UniRule"/>
</dbReference>
<dbReference type="FunFam" id="2.40.50.100:FF:000001">
    <property type="entry name" value="50S ribosomal protein L27"/>
    <property type="match status" value="1"/>
</dbReference>
<dbReference type="Gene3D" id="2.40.50.100">
    <property type="match status" value="1"/>
</dbReference>
<dbReference type="HAMAP" id="MF_00539">
    <property type="entry name" value="Ribosomal_bL27"/>
    <property type="match status" value="1"/>
</dbReference>
<dbReference type="InterPro" id="IPR001684">
    <property type="entry name" value="Ribosomal_bL27"/>
</dbReference>
<dbReference type="InterPro" id="IPR018261">
    <property type="entry name" value="Ribosomal_bL27_CS"/>
</dbReference>
<dbReference type="NCBIfam" id="TIGR00062">
    <property type="entry name" value="L27"/>
    <property type="match status" value="1"/>
</dbReference>
<dbReference type="PANTHER" id="PTHR15893:SF0">
    <property type="entry name" value="LARGE RIBOSOMAL SUBUNIT PROTEIN BL27M"/>
    <property type="match status" value="1"/>
</dbReference>
<dbReference type="PANTHER" id="PTHR15893">
    <property type="entry name" value="RIBOSOMAL PROTEIN L27"/>
    <property type="match status" value="1"/>
</dbReference>
<dbReference type="Pfam" id="PF01016">
    <property type="entry name" value="Ribosomal_L27"/>
    <property type="match status" value="1"/>
</dbReference>
<dbReference type="PRINTS" id="PR00063">
    <property type="entry name" value="RIBOSOMALL27"/>
</dbReference>
<dbReference type="SUPFAM" id="SSF110324">
    <property type="entry name" value="Ribosomal L27 protein-like"/>
    <property type="match status" value="1"/>
</dbReference>
<dbReference type="PROSITE" id="PS00831">
    <property type="entry name" value="RIBOSOMAL_L27"/>
    <property type="match status" value="1"/>
</dbReference>
<name>RL27_PSEAE</name>
<reference key="1">
    <citation type="journal article" date="2000" name="Nature">
        <title>Complete genome sequence of Pseudomonas aeruginosa PAO1, an opportunistic pathogen.</title>
        <authorList>
            <person name="Stover C.K."/>
            <person name="Pham X.-Q.T."/>
            <person name="Erwin A.L."/>
            <person name="Mizoguchi S.D."/>
            <person name="Warrener P."/>
            <person name="Hickey M.J."/>
            <person name="Brinkman F.S.L."/>
            <person name="Hufnagle W.O."/>
            <person name="Kowalik D.J."/>
            <person name="Lagrou M."/>
            <person name="Garber R.L."/>
            <person name="Goltry L."/>
            <person name="Tolentino E."/>
            <person name="Westbrock-Wadman S."/>
            <person name="Yuan Y."/>
            <person name="Brody L.L."/>
            <person name="Coulter S.N."/>
            <person name="Folger K.R."/>
            <person name="Kas A."/>
            <person name="Larbig K."/>
            <person name="Lim R.M."/>
            <person name="Smith K.A."/>
            <person name="Spencer D.H."/>
            <person name="Wong G.K.-S."/>
            <person name="Wu Z."/>
            <person name="Paulsen I.T."/>
            <person name="Reizer J."/>
            <person name="Saier M.H. Jr."/>
            <person name="Hancock R.E.W."/>
            <person name="Lory S."/>
            <person name="Olson M.V."/>
        </authorList>
    </citation>
    <scope>NUCLEOTIDE SEQUENCE [LARGE SCALE GENOMIC DNA]</scope>
    <source>
        <strain>ATCC 15692 / DSM 22644 / CIP 104116 / JCM 14847 / LMG 12228 / 1C / PRS 101 / PAO1</strain>
    </source>
</reference>
<reference key="2">
    <citation type="journal article" date="1995" name="Int. J. Syst. Bacteriol.">
        <title>Comparative ribosomal protein sequence analyses of a phylogenetically defined genus, Pseudomonas, and its relatives.</title>
        <authorList>
            <person name="Ochi K."/>
        </authorList>
    </citation>
    <scope>PROTEIN SEQUENCE OF 2-21</scope>
    <source>
        <strain>ATCC 10145 / DSM 50071 / JCM 5962 / LMG 1242 / NBRC 12689 / NCIMB 8295 / NRRL B-771</strain>
    </source>
</reference>